<dbReference type="EMBL" id="AC084212">
    <property type="status" value="NOT_ANNOTATED_CDS"/>
    <property type="molecule type" value="Genomic_DNA"/>
</dbReference>
<dbReference type="EMBL" id="CH471052">
    <property type="protein sequence ID" value="EAW78701.1"/>
    <property type="molecule type" value="Genomic_DNA"/>
</dbReference>
<dbReference type="EMBL" id="BC010062">
    <property type="status" value="NOT_ANNOTATED_CDS"/>
    <property type="molecule type" value="mRNA"/>
</dbReference>
<dbReference type="EMBL" id="BC029129">
    <property type="protein sequence ID" value="AAH29129.1"/>
    <property type="status" value="ALT_SEQ"/>
    <property type="molecule type" value="mRNA"/>
</dbReference>
<dbReference type="EMBL" id="BC126187">
    <property type="protein sequence ID" value="AAI26188.1"/>
    <property type="molecule type" value="mRNA"/>
</dbReference>
<dbReference type="EMBL" id="BC126189">
    <property type="protein sequence ID" value="AAI26190.1"/>
    <property type="molecule type" value="mRNA"/>
</dbReference>
<dbReference type="EMBL" id="BC144066">
    <property type="status" value="NOT_ANNOTATED_CDS"/>
    <property type="molecule type" value="mRNA"/>
</dbReference>
<dbReference type="RefSeq" id="NP_001093247.1">
    <property type="nucleotide sequence ID" value="NM_001099777.3"/>
</dbReference>
<dbReference type="RefSeq" id="NP_001123473.1">
    <property type="nucleotide sequence ID" value="NM_001130001.2"/>
</dbReference>
<dbReference type="RefSeq" id="NP_001123474.1">
    <property type="nucleotide sequence ID" value="NM_001130002.2"/>
</dbReference>
<dbReference type="RefSeq" id="NP_001230658.1">
    <property type="nucleotide sequence ID" value="NM_001243729.1"/>
</dbReference>
<dbReference type="SMR" id="A1A4F0"/>
<dbReference type="BioGRID" id="127423">
    <property type="interactions" value="9"/>
</dbReference>
<dbReference type="IntAct" id="A1A4F0">
    <property type="interactions" value="9"/>
</dbReference>
<dbReference type="MINT" id="A1A4F0"/>
<dbReference type="STRING" id="9606.ENSP00000413228"/>
<dbReference type="BioMuta" id="PQLC2L"/>
<dbReference type="jPOST" id="A1A4F0"/>
<dbReference type="PaxDb" id="9606-ENSP00000413228"/>
<dbReference type="PeptideAtlas" id="A1A4F0"/>
<dbReference type="ProteomicsDB" id="89">
    <molecule id="A1A4F0-1"/>
</dbReference>
<dbReference type="ProteomicsDB" id="90">
    <molecule id="A1A4F0-2"/>
</dbReference>
<dbReference type="DNASU" id="152078"/>
<dbReference type="UCSC" id="uc003fbo.4">
    <molecule id="A1A4F0-1"/>
    <property type="organism name" value="human"/>
</dbReference>
<dbReference type="AGR" id="HGNC:25146"/>
<dbReference type="DisGeNET" id="152078"/>
<dbReference type="GeneCards" id="SLC66A1LP"/>
<dbReference type="HGNC" id="HGNC:25146">
    <property type="gene designation" value="SLC66A1LP"/>
</dbReference>
<dbReference type="neXtProt" id="NX_A1A4F0"/>
<dbReference type="eggNOG" id="ENOG502S9R0">
    <property type="taxonomic scope" value="Eukaryota"/>
</dbReference>
<dbReference type="HOGENOM" id="CLU_2721546_0_0_1"/>
<dbReference type="InParanoid" id="A1A4F0"/>
<dbReference type="PAN-GO" id="A1A4F0">
    <property type="GO annotations" value="3 GO annotations based on evolutionary models"/>
</dbReference>
<dbReference type="PhylomeDB" id="A1A4F0"/>
<dbReference type="PathwayCommons" id="A1A4F0"/>
<dbReference type="SignaLink" id="A1A4F0"/>
<dbReference type="BioGRID-ORCS" id="152078">
    <property type="hits" value="7 hits in 1133 CRISPR screens"/>
</dbReference>
<dbReference type="ChiTaRS" id="PQLC2L">
    <property type="organism name" value="human"/>
</dbReference>
<dbReference type="GenomeRNAi" id="152078"/>
<dbReference type="Pharos" id="A1A4F0">
    <property type="development level" value="Tdark"/>
</dbReference>
<dbReference type="PRO" id="PR:A1A4F0"/>
<dbReference type="Proteomes" id="UP000005640">
    <property type="component" value="Chromosome 3"/>
</dbReference>
<dbReference type="RNAct" id="A1A4F0">
    <property type="molecule type" value="protein"/>
</dbReference>
<dbReference type="GO" id="GO:0005765">
    <property type="term" value="C:lysosomal membrane"/>
    <property type="evidence" value="ECO:0000318"/>
    <property type="project" value="GO_Central"/>
</dbReference>
<dbReference type="GO" id="GO:0015189">
    <property type="term" value="F:L-lysine transmembrane transporter activity"/>
    <property type="evidence" value="ECO:0000318"/>
    <property type="project" value="GO_Central"/>
</dbReference>
<dbReference type="FunFam" id="1.20.1280.290:FF:000009">
    <property type="entry name" value="PQ loop repeat family protein"/>
    <property type="match status" value="1"/>
</dbReference>
<dbReference type="Gene3D" id="1.20.1280.290">
    <property type="match status" value="1"/>
</dbReference>
<dbReference type="InterPro" id="IPR051415">
    <property type="entry name" value="LAAT-1"/>
</dbReference>
<dbReference type="PANTHER" id="PTHR16201">
    <property type="entry name" value="SEVEN TRANSMEMBRANE PROTEIN 1-RELATED"/>
    <property type="match status" value="1"/>
</dbReference>
<dbReference type="PANTHER" id="PTHR16201:SF42">
    <property type="entry name" value="SOLUTE CARRIER FAMILY 66 MEMBER 1 LIKE"/>
    <property type="match status" value="1"/>
</dbReference>
<accession>A1A4F0</accession>
<accession>C9JP04</accession>
<accession>C9JXB5</accession>
<accession>Q8N6Q6</accession>
<comment type="interaction">
    <interactant intactId="EBI-12018000">
        <id>A1A4F0-2</id>
    </interactant>
    <interactant intactId="EBI-16439278">
        <id>Q6FHY5</id>
        <label>MEOX2</label>
    </interactant>
    <organismsDiffer>false</organismsDiffer>
    <experiments>3</experiments>
</comment>
<comment type="alternative products">
    <event type="alternative splicing"/>
    <isoform>
        <id>A1A4F0-1</id>
        <name>1</name>
        <sequence type="displayed"/>
    </isoform>
    <isoform>
        <id>A1A4F0-2</id>
        <name>2</name>
        <sequence type="described" ref="VSP_036612"/>
    </isoform>
    <isoform>
        <id>A1A4F0-3</id>
        <name>3</name>
        <sequence type="described" ref="VSP_045571"/>
    </isoform>
    <isoform>
        <id>A1A4F0-4</id>
        <name>4</name>
        <sequence type="described" ref="VSP_046204"/>
    </isoform>
</comment>
<comment type="caution">
    <text evidence="2">Could be the product of a pseudogene.</text>
</comment>
<comment type="sequence caution" evidence="2">
    <conflict type="erroneous translation">
        <sequence resource="EMBL-CDS" id="AAH29129"/>
    </conflict>
    <text>Wrong choice of CDS.</text>
</comment>
<feature type="chain" id="PRO_0000301950" description="Putative uncharacterized protein SLC66A1LP">
    <location>
        <begin position="1"/>
        <end position="135"/>
    </location>
</feature>
<feature type="splice variant" id="VSP_045571" description="In isoform 3." evidence="1">
    <original>IFTAIFDMNTDVIILSQFMYYRLKNQKKKMIFQPQLFKDSITREKVRLSLWGVLCPVYIPYSFR</original>
    <variation>F</variation>
    <location>
        <begin position="72"/>
        <end position="135"/>
    </location>
</feature>
<feature type="splice variant" id="VSP_046204" description="In isoform 4." evidence="1">
    <original>IFTAIFDMNTDVIILSQFMYYRLKNQKKKMIFQPQLFKDSITREKVRLSLWGVLCPVYIPYSFR</original>
    <variation>DIPTSVIQRLHHQRESQIVTLGSPLPCIYPIFFQISEISMPGYYSCLCHTTINTSKRRFILT</variation>
    <location>
        <begin position="72"/>
        <end position="135"/>
    </location>
</feature>
<feature type="splice variant" id="VSP_036612" description="In isoform 2." evidence="1">
    <original>MIFQPQLFKDSITREKVRLSLWGVLCPVYIPYSFR</original>
    <variation>ISEEDLRKELHFCCLHWP</variation>
    <location>
        <begin position="101"/>
        <end position="135"/>
    </location>
</feature>
<feature type="sequence variant" id="VAR_050723" description="In dbSNP:rs7616293.">
    <original>V</original>
    <variation>L</variation>
    <location>
        <position position="4"/>
    </location>
</feature>
<evidence type="ECO:0000303" key="1">
    <source>
    </source>
</evidence>
<evidence type="ECO:0000305" key="2"/>
<evidence type="ECO:0000312" key="3">
    <source>
        <dbReference type="EMBL" id="AC084212"/>
    </source>
</evidence>
<evidence type="ECO:0000312" key="4">
    <source>
        <dbReference type="HGNC" id="HGNC:25146"/>
    </source>
</evidence>
<proteinExistence type="uncertain"/>
<gene>
    <name evidence="4" type="primary">SLC66A1LP</name>
    <name evidence="4" type="synonym">C3orf55</name>
    <name evidence="3" type="synonym">PQLC2L</name>
    <name evidence="4" type="synonym">SLC66A1L</name>
</gene>
<protein>
    <recommendedName>
        <fullName evidence="2">Putative uncharacterized protein SLC66A1LP</fullName>
    </recommendedName>
    <alternativeName>
        <fullName evidence="4">PQ-loop repeat-containing protein 2-like</fullName>
    </alternativeName>
    <alternativeName>
        <fullName evidence="2">Solute carrier family 66 member 1-like</fullName>
    </alternativeName>
</protein>
<name>S66AL_HUMAN</name>
<keyword id="KW-0025">Alternative splicing</keyword>
<keyword id="KW-1185">Reference proteome</keyword>
<sequence length="135" mass="15626">MKVVGNYRVNTANSSTDTSGEHLTCLRSQLFVAYRNGRVDEAVSLGFLDCWIGGDLTNFKGCYLTNQLPIQIFTAIFDMNTDVIILSQFMYYRLKNQKKKMIFQPQLFKDSITREKVRLSLWGVLCPVYIPYSFR</sequence>
<organism>
    <name type="scientific">Homo sapiens</name>
    <name type="common">Human</name>
    <dbReference type="NCBI Taxonomy" id="9606"/>
    <lineage>
        <taxon>Eukaryota</taxon>
        <taxon>Metazoa</taxon>
        <taxon>Chordata</taxon>
        <taxon>Craniata</taxon>
        <taxon>Vertebrata</taxon>
        <taxon>Euteleostomi</taxon>
        <taxon>Mammalia</taxon>
        <taxon>Eutheria</taxon>
        <taxon>Euarchontoglires</taxon>
        <taxon>Primates</taxon>
        <taxon>Haplorrhini</taxon>
        <taxon>Catarrhini</taxon>
        <taxon>Hominidae</taxon>
        <taxon>Homo</taxon>
    </lineage>
</organism>
<reference key="1">
    <citation type="journal article" date="2006" name="Nature">
        <title>The DNA sequence, annotation and analysis of human chromosome 3.</title>
        <authorList>
            <person name="Muzny D.M."/>
            <person name="Scherer S.E."/>
            <person name="Kaul R."/>
            <person name="Wang J."/>
            <person name="Yu J."/>
            <person name="Sudbrak R."/>
            <person name="Buhay C.J."/>
            <person name="Chen R."/>
            <person name="Cree A."/>
            <person name="Ding Y."/>
            <person name="Dugan-Rocha S."/>
            <person name="Gill R."/>
            <person name="Gunaratne P."/>
            <person name="Harris R.A."/>
            <person name="Hawes A.C."/>
            <person name="Hernandez J."/>
            <person name="Hodgson A.V."/>
            <person name="Hume J."/>
            <person name="Jackson A."/>
            <person name="Khan Z.M."/>
            <person name="Kovar-Smith C."/>
            <person name="Lewis L.R."/>
            <person name="Lozado R.J."/>
            <person name="Metzker M.L."/>
            <person name="Milosavljevic A."/>
            <person name="Miner G.R."/>
            <person name="Morgan M.B."/>
            <person name="Nazareth L.V."/>
            <person name="Scott G."/>
            <person name="Sodergren E."/>
            <person name="Song X.-Z."/>
            <person name="Steffen D."/>
            <person name="Wei S."/>
            <person name="Wheeler D.A."/>
            <person name="Wright M.W."/>
            <person name="Worley K.C."/>
            <person name="Yuan Y."/>
            <person name="Zhang Z."/>
            <person name="Adams C.Q."/>
            <person name="Ansari-Lari M.A."/>
            <person name="Ayele M."/>
            <person name="Brown M.J."/>
            <person name="Chen G."/>
            <person name="Chen Z."/>
            <person name="Clendenning J."/>
            <person name="Clerc-Blankenburg K.P."/>
            <person name="Chen R."/>
            <person name="Chen Z."/>
            <person name="Davis C."/>
            <person name="Delgado O."/>
            <person name="Dinh H.H."/>
            <person name="Dong W."/>
            <person name="Draper H."/>
            <person name="Ernst S."/>
            <person name="Fu G."/>
            <person name="Gonzalez-Garay M.L."/>
            <person name="Garcia D.K."/>
            <person name="Gillett W."/>
            <person name="Gu J."/>
            <person name="Hao B."/>
            <person name="Haugen E."/>
            <person name="Havlak P."/>
            <person name="He X."/>
            <person name="Hennig S."/>
            <person name="Hu S."/>
            <person name="Huang W."/>
            <person name="Jackson L.R."/>
            <person name="Jacob L.S."/>
            <person name="Kelly S.H."/>
            <person name="Kube M."/>
            <person name="Levy R."/>
            <person name="Li Z."/>
            <person name="Liu B."/>
            <person name="Liu J."/>
            <person name="Liu W."/>
            <person name="Lu J."/>
            <person name="Maheshwari M."/>
            <person name="Nguyen B.-V."/>
            <person name="Okwuonu G.O."/>
            <person name="Palmeiri A."/>
            <person name="Pasternak S."/>
            <person name="Perez L.M."/>
            <person name="Phelps K.A."/>
            <person name="Plopper F.J."/>
            <person name="Qiang B."/>
            <person name="Raymond C."/>
            <person name="Rodriguez R."/>
            <person name="Saenphimmachak C."/>
            <person name="Santibanez J."/>
            <person name="Shen H."/>
            <person name="Shen Y."/>
            <person name="Subramanian S."/>
            <person name="Tabor P.E."/>
            <person name="Verduzco D."/>
            <person name="Waldron L."/>
            <person name="Wang J."/>
            <person name="Wang J."/>
            <person name="Wang Q."/>
            <person name="Williams G.A."/>
            <person name="Wong G.K.-S."/>
            <person name="Yao Z."/>
            <person name="Zhang J."/>
            <person name="Zhang X."/>
            <person name="Zhao G."/>
            <person name="Zhou J."/>
            <person name="Zhou Y."/>
            <person name="Nelson D."/>
            <person name="Lehrach H."/>
            <person name="Reinhardt R."/>
            <person name="Naylor S.L."/>
            <person name="Yang H."/>
            <person name="Olson M."/>
            <person name="Weinstock G."/>
            <person name="Gibbs R.A."/>
        </authorList>
    </citation>
    <scope>NUCLEOTIDE SEQUENCE [LARGE SCALE GENOMIC DNA]</scope>
</reference>
<reference key="2">
    <citation type="submission" date="2005-09" db="EMBL/GenBank/DDBJ databases">
        <authorList>
            <person name="Mural R.J."/>
            <person name="Istrail S."/>
            <person name="Sutton G."/>
            <person name="Florea L."/>
            <person name="Halpern A.L."/>
            <person name="Mobarry C.M."/>
            <person name="Lippert R."/>
            <person name="Walenz B."/>
            <person name="Shatkay H."/>
            <person name="Dew I."/>
            <person name="Miller J.R."/>
            <person name="Flanigan M.J."/>
            <person name="Edwards N.J."/>
            <person name="Bolanos R."/>
            <person name="Fasulo D."/>
            <person name="Halldorsson B.V."/>
            <person name="Hannenhalli S."/>
            <person name="Turner R."/>
            <person name="Yooseph S."/>
            <person name="Lu F."/>
            <person name="Nusskern D.R."/>
            <person name="Shue B.C."/>
            <person name="Zheng X.H."/>
            <person name="Zhong F."/>
            <person name="Delcher A.L."/>
            <person name="Huson D.H."/>
            <person name="Kravitz S.A."/>
            <person name="Mouchard L."/>
            <person name="Reinert K."/>
            <person name="Remington K.A."/>
            <person name="Clark A.G."/>
            <person name="Waterman M.S."/>
            <person name="Eichler E.E."/>
            <person name="Adams M.D."/>
            <person name="Hunkapiller M.W."/>
            <person name="Myers E.W."/>
            <person name="Venter J.C."/>
        </authorList>
    </citation>
    <scope>NUCLEOTIDE SEQUENCE [LARGE SCALE GENOMIC DNA]</scope>
</reference>
<reference key="3">
    <citation type="journal article" date="2004" name="Genome Res.">
        <title>The status, quality, and expansion of the NIH full-length cDNA project: the Mammalian Gene Collection (MGC).</title>
        <authorList>
            <consortium name="The MGC Project Team"/>
        </authorList>
    </citation>
    <scope>NUCLEOTIDE SEQUENCE [LARGE SCALE MRNA] (ISOFORMS 1; 2; 3 AND 4)</scope>
    <source>
        <tissue>Brain</tissue>
        <tissue>Melanoma</tissue>
    </source>
</reference>